<protein>
    <recommendedName>
        <fullName evidence="4">Toxin BcV</fullName>
    </recommendedName>
</protein>
<comment type="function">
    <text evidence="1">Potently and reversibly blocks mammalian Kv11/KCNH/ERG voltage-gated potassium channels. Acts as a gating-modifier toxin that shifts the voltage-dependence of ERG activation in the positive direction and suppresses its current amplitudes elicited by strong depolarizing pulses that maximally activate the channels.</text>
</comment>
<comment type="subcellular location">
    <subcellularLocation>
        <location evidence="5">Secreted</location>
    </subcellularLocation>
    <subcellularLocation>
        <location evidence="5">Nematocyst</location>
    </subcellularLocation>
</comment>
<comment type="mass spectrometry" mass="4368.0" method="MALDI" evidence="3"/>
<comment type="similarity">
    <text evidence="2">Belongs to the sea anemone type 3 (BDS) potassium channel toxin family.</text>
</comment>
<dbReference type="GO" id="GO:0005576">
    <property type="term" value="C:extracellular region"/>
    <property type="evidence" value="ECO:0007669"/>
    <property type="project" value="UniProtKB-SubCell"/>
</dbReference>
<dbReference type="GO" id="GO:0042151">
    <property type="term" value="C:nematocyst"/>
    <property type="evidence" value="ECO:0007669"/>
    <property type="project" value="UniProtKB-SubCell"/>
</dbReference>
<dbReference type="GO" id="GO:0008200">
    <property type="term" value="F:ion channel inhibitor activity"/>
    <property type="evidence" value="ECO:0007669"/>
    <property type="project" value="InterPro"/>
</dbReference>
<dbReference type="GO" id="GO:0015459">
    <property type="term" value="F:potassium channel regulator activity"/>
    <property type="evidence" value="ECO:0007669"/>
    <property type="project" value="UniProtKB-KW"/>
</dbReference>
<dbReference type="GO" id="GO:0090729">
    <property type="term" value="F:toxin activity"/>
    <property type="evidence" value="ECO:0007669"/>
    <property type="project" value="UniProtKB-KW"/>
</dbReference>
<dbReference type="Gene3D" id="2.20.20.10">
    <property type="entry name" value="Anthopleurin-A"/>
    <property type="match status" value="1"/>
</dbReference>
<dbReference type="InterPro" id="IPR012414">
    <property type="entry name" value="BDS_K_chnl_tox"/>
</dbReference>
<dbReference type="InterPro" id="IPR023355">
    <property type="entry name" value="Myo_ane_neurotoxin_sf"/>
</dbReference>
<dbReference type="Pfam" id="PF07936">
    <property type="entry name" value="Defensin_4"/>
    <property type="match status" value="1"/>
</dbReference>
<evidence type="ECO:0000250" key="1">
    <source>
        <dbReference type="UniProtKB" id="P61541"/>
    </source>
</evidence>
<evidence type="ECO:0000255" key="2"/>
<evidence type="ECO:0000269" key="3">
    <source ref="1"/>
</evidence>
<evidence type="ECO:0000303" key="4">
    <source ref="1"/>
</evidence>
<evidence type="ECO:0000305" key="5">
    <source ref="1"/>
</evidence>
<sequence length="33" mass="3536">GTTCKCGSTLGIYWFAVTSCPPGRGYTTHCGYF</sequence>
<accession>P86470</accession>
<reference key="1">
    <citation type="submission" date="2010-02" db="UniProtKB">
        <authorList>
            <person name="Zaharenko A.J."/>
            <person name="Ferreira W.A. Jr."/>
            <person name="Oliveira J.S."/>
            <person name="Madio B."/>
            <person name="Orts D.J.B."/>
            <person name="Konno K."/>
            <person name="Richardson M."/>
            <person name="Freitas J.C."/>
        </authorList>
    </citation>
    <scope>PROTEIN SEQUENCE</scope>
    <scope>MASS SPECTROMETRY</scope>
</reference>
<organism>
    <name type="scientific">Bunodosoma caissarum</name>
    <name type="common">Sea anemone</name>
    <dbReference type="NCBI Taxonomy" id="31165"/>
    <lineage>
        <taxon>Eukaryota</taxon>
        <taxon>Metazoa</taxon>
        <taxon>Cnidaria</taxon>
        <taxon>Anthozoa</taxon>
        <taxon>Hexacorallia</taxon>
        <taxon>Actiniaria</taxon>
        <taxon>Actiniidae</taxon>
        <taxon>Bunodosoma</taxon>
    </lineage>
</organism>
<feature type="chain" id="PRO_0000392960" description="Toxin BcV">
    <location>
        <begin position="1"/>
        <end position="33" status="greater than"/>
    </location>
</feature>
<feature type="disulfide bond" evidence="1">
    <location>
        <begin position="4"/>
        <end status="unknown"/>
    </location>
</feature>
<feature type="disulfide bond" evidence="1">
    <location>
        <begin position="6"/>
        <end position="30"/>
    </location>
</feature>
<feature type="disulfide bond" evidence="1">
    <location>
        <begin position="20"/>
        <end status="unknown"/>
    </location>
</feature>
<feature type="non-terminal residue">
    <location>
        <position position="33"/>
    </location>
</feature>
<name>BDSV_BUNCI</name>
<proteinExistence type="evidence at protein level"/>
<keyword id="KW-0903">Direct protein sequencing</keyword>
<keyword id="KW-1015">Disulfide bond</keyword>
<keyword id="KW-0872">Ion channel impairing toxin</keyword>
<keyword id="KW-0166">Nematocyst</keyword>
<keyword id="KW-0632">Potassium channel impairing toxin</keyword>
<keyword id="KW-0964">Secreted</keyword>
<keyword id="KW-0800">Toxin</keyword>
<keyword id="KW-1220">Voltage-gated potassium channel impairing toxin</keyword>